<reference key="1">
    <citation type="journal article" date="2005" name="Science">
        <title>The transcriptional landscape of the mammalian genome.</title>
        <authorList>
            <person name="Carninci P."/>
            <person name="Kasukawa T."/>
            <person name="Katayama S."/>
            <person name="Gough J."/>
            <person name="Frith M.C."/>
            <person name="Maeda N."/>
            <person name="Oyama R."/>
            <person name="Ravasi T."/>
            <person name="Lenhard B."/>
            <person name="Wells C."/>
            <person name="Kodzius R."/>
            <person name="Shimokawa K."/>
            <person name="Bajic V.B."/>
            <person name="Brenner S.E."/>
            <person name="Batalov S."/>
            <person name="Forrest A.R."/>
            <person name="Zavolan M."/>
            <person name="Davis M.J."/>
            <person name="Wilming L.G."/>
            <person name="Aidinis V."/>
            <person name="Allen J.E."/>
            <person name="Ambesi-Impiombato A."/>
            <person name="Apweiler R."/>
            <person name="Aturaliya R.N."/>
            <person name="Bailey T.L."/>
            <person name="Bansal M."/>
            <person name="Baxter L."/>
            <person name="Beisel K.W."/>
            <person name="Bersano T."/>
            <person name="Bono H."/>
            <person name="Chalk A.M."/>
            <person name="Chiu K.P."/>
            <person name="Choudhary V."/>
            <person name="Christoffels A."/>
            <person name="Clutterbuck D.R."/>
            <person name="Crowe M.L."/>
            <person name="Dalla E."/>
            <person name="Dalrymple B.P."/>
            <person name="de Bono B."/>
            <person name="Della Gatta G."/>
            <person name="di Bernardo D."/>
            <person name="Down T."/>
            <person name="Engstrom P."/>
            <person name="Fagiolini M."/>
            <person name="Faulkner G."/>
            <person name="Fletcher C.F."/>
            <person name="Fukushima T."/>
            <person name="Furuno M."/>
            <person name="Futaki S."/>
            <person name="Gariboldi M."/>
            <person name="Georgii-Hemming P."/>
            <person name="Gingeras T.R."/>
            <person name="Gojobori T."/>
            <person name="Green R.E."/>
            <person name="Gustincich S."/>
            <person name="Harbers M."/>
            <person name="Hayashi Y."/>
            <person name="Hensch T.K."/>
            <person name="Hirokawa N."/>
            <person name="Hill D."/>
            <person name="Huminiecki L."/>
            <person name="Iacono M."/>
            <person name="Ikeo K."/>
            <person name="Iwama A."/>
            <person name="Ishikawa T."/>
            <person name="Jakt M."/>
            <person name="Kanapin A."/>
            <person name="Katoh M."/>
            <person name="Kawasawa Y."/>
            <person name="Kelso J."/>
            <person name="Kitamura H."/>
            <person name="Kitano H."/>
            <person name="Kollias G."/>
            <person name="Krishnan S.P."/>
            <person name="Kruger A."/>
            <person name="Kummerfeld S.K."/>
            <person name="Kurochkin I.V."/>
            <person name="Lareau L.F."/>
            <person name="Lazarevic D."/>
            <person name="Lipovich L."/>
            <person name="Liu J."/>
            <person name="Liuni S."/>
            <person name="McWilliam S."/>
            <person name="Madan Babu M."/>
            <person name="Madera M."/>
            <person name="Marchionni L."/>
            <person name="Matsuda H."/>
            <person name="Matsuzawa S."/>
            <person name="Miki H."/>
            <person name="Mignone F."/>
            <person name="Miyake S."/>
            <person name="Morris K."/>
            <person name="Mottagui-Tabar S."/>
            <person name="Mulder N."/>
            <person name="Nakano N."/>
            <person name="Nakauchi H."/>
            <person name="Ng P."/>
            <person name="Nilsson R."/>
            <person name="Nishiguchi S."/>
            <person name="Nishikawa S."/>
            <person name="Nori F."/>
            <person name="Ohara O."/>
            <person name="Okazaki Y."/>
            <person name="Orlando V."/>
            <person name="Pang K.C."/>
            <person name="Pavan W.J."/>
            <person name="Pavesi G."/>
            <person name="Pesole G."/>
            <person name="Petrovsky N."/>
            <person name="Piazza S."/>
            <person name="Reed J."/>
            <person name="Reid J.F."/>
            <person name="Ring B.Z."/>
            <person name="Ringwald M."/>
            <person name="Rost B."/>
            <person name="Ruan Y."/>
            <person name="Salzberg S.L."/>
            <person name="Sandelin A."/>
            <person name="Schneider C."/>
            <person name="Schoenbach C."/>
            <person name="Sekiguchi K."/>
            <person name="Semple C.A."/>
            <person name="Seno S."/>
            <person name="Sessa L."/>
            <person name="Sheng Y."/>
            <person name="Shibata Y."/>
            <person name="Shimada H."/>
            <person name="Shimada K."/>
            <person name="Silva D."/>
            <person name="Sinclair B."/>
            <person name="Sperling S."/>
            <person name="Stupka E."/>
            <person name="Sugiura K."/>
            <person name="Sultana R."/>
            <person name="Takenaka Y."/>
            <person name="Taki K."/>
            <person name="Tammoja K."/>
            <person name="Tan S.L."/>
            <person name="Tang S."/>
            <person name="Taylor M.S."/>
            <person name="Tegner J."/>
            <person name="Teichmann S.A."/>
            <person name="Ueda H.R."/>
            <person name="van Nimwegen E."/>
            <person name="Verardo R."/>
            <person name="Wei C.L."/>
            <person name="Yagi K."/>
            <person name="Yamanishi H."/>
            <person name="Zabarovsky E."/>
            <person name="Zhu S."/>
            <person name="Zimmer A."/>
            <person name="Hide W."/>
            <person name="Bult C."/>
            <person name="Grimmond S.M."/>
            <person name="Teasdale R.D."/>
            <person name="Liu E.T."/>
            <person name="Brusic V."/>
            <person name="Quackenbush J."/>
            <person name="Wahlestedt C."/>
            <person name="Mattick J.S."/>
            <person name="Hume D.A."/>
            <person name="Kai C."/>
            <person name="Sasaki D."/>
            <person name="Tomaru Y."/>
            <person name="Fukuda S."/>
            <person name="Kanamori-Katayama M."/>
            <person name="Suzuki M."/>
            <person name="Aoki J."/>
            <person name="Arakawa T."/>
            <person name="Iida J."/>
            <person name="Imamura K."/>
            <person name="Itoh M."/>
            <person name="Kato T."/>
            <person name="Kawaji H."/>
            <person name="Kawagashira N."/>
            <person name="Kawashima T."/>
            <person name="Kojima M."/>
            <person name="Kondo S."/>
            <person name="Konno H."/>
            <person name="Nakano K."/>
            <person name="Ninomiya N."/>
            <person name="Nishio T."/>
            <person name="Okada M."/>
            <person name="Plessy C."/>
            <person name="Shibata K."/>
            <person name="Shiraki T."/>
            <person name="Suzuki S."/>
            <person name="Tagami M."/>
            <person name="Waki K."/>
            <person name="Watahiki A."/>
            <person name="Okamura-Oho Y."/>
            <person name="Suzuki H."/>
            <person name="Kawai J."/>
            <person name="Hayashizaki Y."/>
        </authorList>
    </citation>
    <scope>NUCLEOTIDE SEQUENCE [LARGE SCALE MRNA] (ISOFORM 1)</scope>
    <source>
        <strain>NOD</strain>
    </source>
</reference>
<reference key="2">
    <citation type="journal article" date="2009" name="PLoS Biol.">
        <title>Lineage-specific biology revealed by a finished genome assembly of the mouse.</title>
        <authorList>
            <person name="Church D.M."/>
            <person name="Goodstadt L."/>
            <person name="Hillier L.W."/>
            <person name="Zody M.C."/>
            <person name="Goldstein S."/>
            <person name="She X."/>
            <person name="Bult C.J."/>
            <person name="Agarwala R."/>
            <person name="Cherry J.L."/>
            <person name="DiCuccio M."/>
            <person name="Hlavina W."/>
            <person name="Kapustin Y."/>
            <person name="Meric P."/>
            <person name="Maglott D."/>
            <person name="Birtle Z."/>
            <person name="Marques A.C."/>
            <person name="Graves T."/>
            <person name="Zhou S."/>
            <person name="Teague B."/>
            <person name="Potamousis K."/>
            <person name="Churas C."/>
            <person name="Place M."/>
            <person name="Herschleb J."/>
            <person name="Runnheim R."/>
            <person name="Forrest D."/>
            <person name="Amos-Landgraf J."/>
            <person name="Schwartz D.C."/>
            <person name="Cheng Z."/>
            <person name="Lindblad-Toh K."/>
            <person name="Eichler E.E."/>
            <person name="Ponting C.P."/>
        </authorList>
    </citation>
    <scope>NUCLEOTIDE SEQUENCE [LARGE SCALE GENOMIC DNA]</scope>
    <source>
        <strain>C57BL/6J</strain>
    </source>
</reference>
<reference key="3">
    <citation type="journal article" date="2004" name="Genome Res.">
        <title>The status, quality, and expansion of the NIH full-length cDNA project: the Mammalian Gene Collection (MGC).</title>
        <authorList>
            <consortium name="The MGC Project Team"/>
        </authorList>
    </citation>
    <scope>NUCLEOTIDE SEQUENCE [LARGE SCALE MRNA] (ISOFORM 2)</scope>
</reference>
<reference key="4">
    <citation type="journal article" date="2002" name="Dev. Biol.">
        <title>The E3 ubiquitin ligase GREUL1 anteriorizes ectoderm during Xenopus development.</title>
        <authorList>
            <person name="Borchers A.G.M."/>
            <person name="Hufton A.L."/>
            <person name="Eldridge A.G."/>
            <person name="Jackson P.K."/>
            <person name="Harland R.M."/>
            <person name="Baker J.C."/>
        </authorList>
    </citation>
    <scope>NUCLEOTIDE SEQUENCE [MRNA] OF 113-394</scope>
    <source>
        <strain>CD-1</strain>
    </source>
</reference>
<reference key="5">
    <citation type="journal article" date="2009" name="Immunity">
        <title>The phagosomal proteome in interferon-gamma-activated macrophages.</title>
        <authorList>
            <person name="Trost M."/>
            <person name="English L."/>
            <person name="Lemieux S."/>
            <person name="Courcelles M."/>
            <person name="Desjardins M."/>
            <person name="Thibault P."/>
        </authorList>
    </citation>
    <scope>PHOSPHORYLATION [LARGE SCALE ANALYSIS] AT SER-341 AND SER-344</scope>
    <scope>IDENTIFICATION BY MASS SPECTROMETRY [LARGE SCALE ANALYSIS]</scope>
</reference>
<reference key="6">
    <citation type="journal article" date="2010" name="Cell">
        <title>A tissue-specific atlas of mouse protein phosphorylation and expression.</title>
        <authorList>
            <person name="Huttlin E.L."/>
            <person name="Jedrychowski M.P."/>
            <person name="Elias J.E."/>
            <person name="Goswami T."/>
            <person name="Rad R."/>
            <person name="Beausoleil S.A."/>
            <person name="Villen J."/>
            <person name="Haas W."/>
            <person name="Sowa M.E."/>
            <person name="Gygi S.P."/>
        </authorList>
    </citation>
    <scope>PHOSPHORYLATION [LARGE SCALE ANALYSIS] AT THR-327</scope>
    <scope>IDENTIFICATION BY MASS SPECTROMETRY [LARGE SCALE ANALYSIS]</scope>
    <source>
        <tissue>Pancreas</tissue>
    </source>
</reference>
<accession>Q3U2C5</accession>
<accession>E9QAH5</accession>
<accession>Q14BF0</accession>
<accession>Q8CGR2</accession>
<gene>
    <name type="primary">Rnf149</name>
    <name type="synonym">Greul4</name>
</gene>
<dbReference type="EC" id="2.3.2.27"/>
<dbReference type="EMBL" id="AK155360">
    <property type="protein sequence ID" value="BAE33216.1"/>
    <property type="molecule type" value="mRNA"/>
</dbReference>
<dbReference type="EMBL" id="AC119809">
    <property type="status" value="NOT_ANNOTATED_CDS"/>
    <property type="molecule type" value="Genomic_DNA"/>
</dbReference>
<dbReference type="EMBL" id="BC115968">
    <property type="protein sequence ID" value="AAI15969.1"/>
    <property type="molecule type" value="mRNA"/>
</dbReference>
<dbReference type="EMBL" id="AY155439">
    <property type="protein sequence ID" value="AAN75220.1"/>
    <property type="molecule type" value="mRNA"/>
</dbReference>
<dbReference type="CCDS" id="CCDS14907.1">
    <molecule id="Q3U2C5-1"/>
</dbReference>
<dbReference type="RefSeq" id="NP_001028307.2">
    <molecule id="Q3U2C5-1"/>
    <property type="nucleotide sequence ID" value="NM_001033135.4"/>
</dbReference>
<dbReference type="SMR" id="Q3U2C5"/>
<dbReference type="BioGRID" id="212377">
    <property type="interactions" value="1"/>
</dbReference>
<dbReference type="FunCoup" id="Q3U2C5">
    <property type="interactions" value="1346"/>
</dbReference>
<dbReference type="STRING" id="10090.ENSMUSP00000050388"/>
<dbReference type="GlyCosmos" id="Q3U2C5">
    <property type="glycosylation" value="3 sites, No reported glycans"/>
</dbReference>
<dbReference type="GlyGen" id="Q3U2C5">
    <property type="glycosylation" value="3 sites"/>
</dbReference>
<dbReference type="iPTMnet" id="Q3U2C5"/>
<dbReference type="PhosphoSitePlus" id="Q3U2C5"/>
<dbReference type="SwissPalm" id="Q3U2C5"/>
<dbReference type="jPOST" id="Q3U2C5"/>
<dbReference type="PaxDb" id="10090-ENSMUSP00000050388"/>
<dbReference type="PeptideAtlas" id="Q3U2C5"/>
<dbReference type="ProteomicsDB" id="301614">
    <molecule id="Q3U2C5-1"/>
</dbReference>
<dbReference type="ProteomicsDB" id="301615">
    <molecule id="Q3U2C5-2"/>
</dbReference>
<dbReference type="Antibodypedia" id="2559">
    <property type="antibodies" value="188 antibodies from 23 providers"/>
</dbReference>
<dbReference type="DNASU" id="67702"/>
<dbReference type="Ensembl" id="ENSMUST00000062525.11">
    <molecule id="Q3U2C5-1"/>
    <property type="protein sequence ID" value="ENSMUSP00000050388.6"/>
    <property type="gene ID" value="ENSMUSG00000048234.14"/>
</dbReference>
<dbReference type="GeneID" id="67702"/>
<dbReference type="KEGG" id="mmu:67702"/>
<dbReference type="UCSC" id="uc007atl.3">
    <molecule id="Q3U2C5-1"/>
    <property type="organism name" value="mouse"/>
</dbReference>
<dbReference type="AGR" id="MGI:2677438"/>
<dbReference type="CTD" id="284996"/>
<dbReference type="MGI" id="MGI:2677438">
    <property type="gene designation" value="Rnf149"/>
</dbReference>
<dbReference type="VEuPathDB" id="HostDB:ENSMUSG00000048234"/>
<dbReference type="eggNOG" id="KOG4628">
    <property type="taxonomic scope" value="Eukaryota"/>
</dbReference>
<dbReference type="GeneTree" id="ENSGT00940000161020"/>
<dbReference type="HOGENOM" id="CLU_049885_1_0_1"/>
<dbReference type="InParanoid" id="Q3U2C5"/>
<dbReference type="OMA" id="MAWRGPE"/>
<dbReference type="OrthoDB" id="9984778at2759"/>
<dbReference type="PhylomeDB" id="Q3U2C5"/>
<dbReference type="TreeFam" id="TF317486"/>
<dbReference type="UniPathway" id="UPA00143"/>
<dbReference type="BioGRID-ORCS" id="67702">
    <property type="hits" value="2 hits in 78 CRISPR screens"/>
</dbReference>
<dbReference type="ChiTaRS" id="Rnf149">
    <property type="organism name" value="mouse"/>
</dbReference>
<dbReference type="PRO" id="PR:Q3U2C5"/>
<dbReference type="Proteomes" id="UP000000589">
    <property type="component" value="Chromosome 1"/>
</dbReference>
<dbReference type="RNAct" id="Q3U2C5">
    <property type="molecule type" value="protein"/>
</dbReference>
<dbReference type="Bgee" id="ENSMUSG00000048234">
    <property type="expression patterns" value="Expressed in granulocyte and 126 other cell types or tissues"/>
</dbReference>
<dbReference type="ExpressionAtlas" id="Q3U2C5">
    <property type="expression patterns" value="baseline and differential"/>
</dbReference>
<dbReference type="GO" id="GO:0016020">
    <property type="term" value="C:membrane"/>
    <property type="evidence" value="ECO:0007669"/>
    <property type="project" value="UniProtKB-SubCell"/>
</dbReference>
<dbReference type="GO" id="GO:0061630">
    <property type="term" value="F:ubiquitin protein ligase activity"/>
    <property type="evidence" value="ECO:0000314"/>
    <property type="project" value="MGI"/>
</dbReference>
<dbReference type="GO" id="GO:0008270">
    <property type="term" value="F:zinc ion binding"/>
    <property type="evidence" value="ECO:0007669"/>
    <property type="project" value="UniProtKB-KW"/>
</dbReference>
<dbReference type="GO" id="GO:0071466">
    <property type="term" value="P:cellular response to xenobiotic stimulus"/>
    <property type="evidence" value="ECO:0000314"/>
    <property type="project" value="MGI"/>
</dbReference>
<dbReference type="GO" id="GO:0043409">
    <property type="term" value="P:negative regulation of MAPK cascade"/>
    <property type="evidence" value="ECO:0000314"/>
    <property type="project" value="MGI"/>
</dbReference>
<dbReference type="GO" id="GO:0016567">
    <property type="term" value="P:protein ubiquitination"/>
    <property type="evidence" value="ECO:0007669"/>
    <property type="project" value="UniProtKB-UniPathway"/>
</dbReference>
<dbReference type="GO" id="GO:0031647">
    <property type="term" value="P:regulation of protein stability"/>
    <property type="evidence" value="ECO:0000314"/>
    <property type="project" value="MGI"/>
</dbReference>
<dbReference type="CDD" id="cd02122">
    <property type="entry name" value="PA_GRAIL_like"/>
    <property type="match status" value="1"/>
</dbReference>
<dbReference type="CDD" id="cd16804">
    <property type="entry name" value="RING-H2_RNF149"/>
    <property type="match status" value="1"/>
</dbReference>
<dbReference type="FunFam" id="3.50.30.30:FF:000003">
    <property type="entry name" value="E3 ubiquitin-protein ligase RNF128"/>
    <property type="match status" value="1"/>
</dbReference>
<dbReference type="FunFam" id="3.30.40.10:FF:000009">
    <property type="entry name" value="E3 ubiquitin-protein ligase RNF130"/>
    <property type="match status" value="1"/>
</dbReference>
<dbReference type="Gene3D" id="3.50.30.30">
    <property type="match status" value="1"/>
</dbReference>
<dbReference type="Gene3D" id="3.30.40.10">
    <property type="entry name" value="Zinc/RING finger domain, C3HC4 (zinc finger)"/>
    <property type="match status" value="1"/>
</dbReference>
<dbReference type="InterPro" id="IPR046450">
    <property type="entry name" value="PA_dom_sf"/>
</dbReference>
<dbReference type="InterPro" id="IPR003137">
    <property type="entry name" value="PA_domain"/>
</dbReference>
<dbReference type="InterPro" id="IPR042712">
    <property type="entry name" value="RNF149_RING-H2"/>
</dbReference>
<dbReference type="InterPro" id="IPR001841">
    <property type="entry name" value="Znf_RING"/>
</dbReference>
<dbReference type="InterPro" id="IPR013083">
    <property type="entry name" value="Znf_RING/FYVE/PHD"/>
</dbReference>
<dbReference type="PANTHER" id="PTHR46539">
    <property type="entry name" value="E3 UBIQUITIN-PROTEIN LIGASE ATL42"/>
    <property type="match status" value="1"/>
</dbReference>
<dbReference type="PANTHER" id="PTHR46539:SF26">
    <property type="entry name" value="E3 UBIQUITIN-PROTEIN LIGASE RNF149"/>
    <property type="match status" value="1"/>
</dbReference>
<dbReference type="Pfam" id="PF02225">
    <property type="entry name" value="PA"/>
    <property type="match status" value="1"/>
</dbReference>
<dbReference type="Pfam" id="PF13639">
    <property type="entry name" value="zf-RING_2"/>
    <property type="match status" value="1"/>
</dbReference>
<dbReference type="SMART" id="SM00184">
    <property type="entry name" value="RING"/>
    <property type="match status" value="1"/>
</dbReference>
<dbReference type="SUPFAM" id="SSF52025">
    <property type="entry name" value="PA domain"/>
    <property type="match status" value="1"/>
</dbReference>
<dbReference type="SUPFAM" id="SSF57850">
    <property type="entry name" value="RING/U-box"/>
    <property type="match status" value="1"/>
</dbReference>
<dbReference type="PROSITE" id="PS50089">
    <property type="entry name" value="ZF_RING_2"/>
    <property type="match status" value="1"/>
</dbReference>
<feature type="signal peptide" evidence="2">
    <location>
        <begin position="1"/>
        <end position="31"/>
    </location>
</feature>
<feature type="chain" id="PRO_0000261612" description="E3 ubiquitin-protein ligase RNF149">
    <location>
        <begin position="32"/>
        <end position="394"/>
    </location>
</feature>
<feature type="transmembrane region" description="Helical" evidence="2">
    <location>
        <begin position="197"/>
        <end position="217"/>
    </location>
</feature>
<feature type="domain" description="PA">
    <location>
        <begin position="66"/>
        <end position="171"/>
    </location>
</feature>
<feature type="zinc finger region" description="RING-type; atypical" evidence="3">
    <location>
        <begin position="265"/>
        <end position="306"/>
    </location>
</feature>
<feature type="region of interest" description="Disordered" evidence="4">
    <location>
        <begin position="321"/>
        <end position="394"/>
    </location>
</feature>
<feature type="compositionally biased region" description="Low complexity" evidence="4">
    <location>
        <begin position="352"/>
        <end position="362"/>
    </location>
</feature>
<feature type="modified residue" description="Phosphothreonine" evidence="8">
    <location>
        <position position="327"/>
    </location>
</feature>
<feature type="modified residue" description="Phosphoserine" evidence="7">
    <location>
        <position position="341"/>
    </location>
</feature>
<feature type="modified residue" description="Phosphoserine" evidence="7">
    <location>
        <position position="344"/>
    </location>
</feature>
<feature type="glycosylation site" description="N-linked (GlcNAc...) asparagine" evidence="2">
    <location>
        <position position="51"/>
    </location>
</feature>
<feature type="glycosylation site" description="N-linked (GlcNAc...) asparagine" evidence="2">
    <location>
        <position position="141"/>
    </location>
</feature>
<feature type="glycosylation site" description="N-linked (GlcNAc...) asparagine" evidence="2">
    <location>
        <position position="339"/>
    </location>
</feature>
<feature type="splice variant" id="VSP_021734" description="In isoform 2." evidence="5">
    <location>
        <begin position="1"/>
        <end position="145"/>
    </location>
</feature>
<feature type="sequence conflict" description="In Ref. 1; BAE33216." evidence="6" ref="1">
    <original>T</original>
    <variation>S</variation>
    <location>
        <position position="115"/>
    </location>
</feature>
<feature type="sequence conflict" description="In Ref. 1; BAE33216." evidence="6" ref="1">
    <original>G</original>
    <variation>E</variation>
    <location>
        <position position="174"/>
    </location>
</feature>
<evidence type="ECO:0000250" key="1"/>
<evidence type="ECO:0000255" key="2"/>
<evidence type="ECO:0000255" key="3">
    <source>
        <dbReference type="PROSITE-ProRule" id="PRU00175"/>
    </source>
</evidence>
<evidence type="ECO:0000256" key="4">
    <source>
        <dbReference type="SAM" id="MobiDB-lite"/>
    </source>
</evidence>
<evidence type="ECO:0000303" key="5">
    <source>
    </source>
</evidence>
<evidence type="ECO:0000305" key="6"/>
<evidence type="ECO:0007744" key="7">
    <source>
    </source>
</evidence>
<evidence type="ECO:0007744" key="8">
    <source>
    </source>
</evidence>
<sequence length="394" mass="42553">MAARRRPAAGVGARDALAVLALALCTPGVGGGALEWYSAMVSIEYVDPQSNLTVWSVSESGRFGESSLREERQGLVGVPRAPAPAEGCAPDTRFVAPGALGNAPWVALVARGGCTFKDKVLAAARRNASAVVVYNLESNGNATEPMSHAGTGNIVVIMISYPKGREIFDLVQKGIPVKMRIEIGTRHMQEFISGQSVVFVAIAFITMMIISLAWLIFYYIQRFLYTGSQFGSQNHRKETKKVIGQLPLHTVKHGEKGIDVDAENCAVCIENFKVKDVIRILPCKHIFHRICIDPWLLDHRTCPMCKLDVIKALGYWGDPEDTQELPTPEAAPGRVSVGNLSVTSQDEERSESNLPSSSSSESGPHRPCLKEDAGEDTALLGAGRSEPQHGGSIC</sequence>
<proteinExistence type="evidence at protein level"/>
<comment type="function">
    <text evidence="1">E3 ubiquitin-protein ligase. Ubiquitinates BRAF, inducing its proteasomal degradation.</text>
</comment>
<comment type="catalytic activity">
    <reaction>
        <text>S-ubiquitinyl-[E2 ubiquitin-conjugating enzyme]-L-cysteine + [acceptor protein]-L-lysine = [E2 ubiquitin-conjugating enzyme]-L-cysteine + N(6)-ubiquitinyl-[acceptor protein]-L-lysine.</text>
        <dbReference type="EC" id="2.3.2.27"/>
    </reaction>
</comment>
<comment type="pathway">
    <text>Protein modification; protein ubiquitination.</text>
</comment>
<comment type="subcellular location">
    <subcellularLocation>
        <location evidence="6">Membrane</location>
        <topology evidence="6">Single-pass membrane protein</topology>
    </subcellularLocation>
</comment>
<comment type="alternative products">
    <event type="alternative splicing"/>
    <isoform>
        <id>Q3U2C5-1</id>
        <name>1</name>
        <sequence type="displayed"/>
    </isoform>
    <isoform>
        <id>Q3U2C5-2</id>
        <name>2</name>
        <sequence type="described" ref="VSP_021734"/>
    </isoform>
</comment>
<comment type="domain">
    <text evidence="1">The RING-type zinc finger domain mediates binding to an E2 ubiquitin-conjugating enzyme.</text>
</comment>
<organism>
    <name type="scientific">Mus musculus</name>
    <name type="common">Mouse</name>
    <dbReference type="NCBI Taxonomy" id="10090"/>
    <lineage>
        <taxon>Eukaryota</taxon>
        <taxon>Metazoa</taxon>
        <taxon>Chordata</taxon>
        <taxon>Craniata</taxon>
        <taxon>Vertebrata</taxon>
        <taxon>Euteleostomi</taxon>
        <taxon>Mammalia</taxon>
        <taxon>Eutheria</taxon>
        <taxon>Euarchontoglires</taxon>
        <taxon>Glires</taxon>
        <taxon>Rodentia</taxon>
        <taxon>Myomorpha</taxon>
        <taxon>Muroidea</taxon>
        <taxon>Muridae</taxon>
        <taxon>Murinae</taxon>
        <taxon>Mus</taxon>
        <taxon>Mus</taxon>
    </lineage>
</organism>
<name>RN149_MOUSE</name>
<keyword id="KW-0025">Alternative splicing</keyword>
<keyword id="KW-0325">Glycoprotein</keyword>
<keyword id="KW-0472">Membrane</keyword>
<keyword id="KW-0479">Metal-binding</keyword>
<keyword id="KW-0597">Phosphoprotein</keyword>
<keyword id="KW-1185">Reference proteome</keyword>
<keyword id="KW-0732">Signal</keyword>
<keyword id="KW-0808">Transferase</keyword>
<keyword id="KW-0812">Transmembrane</keyword>
<keyword id="KW-1133">Transmembrane helix</keyword>
<keyword id="KW-0833">Ubl conjugation pathway</keyword>
<keyword id="KW-0862">Zinc</keyword>
<keyword id="KW-0863">Zinc-finger</keyword>
<protein>
    <recommendedName>
        <fullName>E3 ubiquitin-protein ligase RNF149</fullName>
        <ecNumber>2.3.2.27</ecNumber>
    </recommendedName>
    <alternativeName>
        <fullName>Goliath-related E3 ubiquitin-protein ligase 4</fullName>
    </alternativeName>
    <alternativeName>
        <fullName>RING finger protein 149</fullName>
    </alternativeName>
    <alternativeName>
        <fullName evidence="6">RING-type E3 ubiquitin transferase RNF149</fullName>
    </alternativeName>
</protein>